<sequence>MAKHLFTSESVSEGHPDKIADQISDAVLDAILQQDPKARVACETYVKTGMVLVGGEITTSAWVDIEEITRNTVREIGYVHSDMGFDANSCAVLSAIGKQSPDINQGVDRADPLEQGAGDQGLMFGYATNETDVLMPAPITYAHRLVQRQAEVRKNGTLPWLRPDAKSQVTFQYDDGKIVGIDAVVLSTQHAEDIDQKSLQEAVMEEIIKPILPSEWLNTSTKFFINPTGRFVIGGPMGDCGLTGRKIIVDTYGGMARHGGGAFSGKDPSKVDRSAAYAARYVAKNIVAAGLADRCEIQVSYAIGVAEPTSIMVETFGTEKVPVEQLILLVREFFDLRPYGLIQMLDLLHPIYKETAAYGHFGRENFPWEKTDKAQLLRDAAGLK</sequence>
<proteinExistence type="inferred from homology"/>
<gene>
    <name evidence="1" type="primary">metK</name>
    <name type="ordered locus">SeHA_C3328</name>
</gene>
<dbReference type="EC" id="2.5.1.6" evidence="1"/>
<dbReference type="EMBL" id="CP001120">
    <property type="protein sequence ID" value="ACF67470.1"/>
    <property type="molecule type" value="Genomic_DNA"/>
</dbReference>
<dbReference type="RefSeq" id="WP_001062141.1">
    <property type="nucleotide sequence ID" value="NC_011083.1"/>
</dbReference>
<dbReference type="SMR" id="B4THH4"/>
<dbReference type="KEGG" id="seh:SeHA_C3328"/>
<dbReference type="HOGENOM" id="CLU_041802_1_1_6"/>
<dbReference type="UniPathway" id="UPA00315">
    <property type="reaction ID" value="UER00080"/>
</dbReference>
<dbReference type="Proteomes" id="UP000001866">
    <property type="component" value="Chromosome"/>
</dbReference>
<dbReference type="GO" id="GO:0005737">
    <property type="term" value="C:cytoplasm"/>
    <property type="evidence" value="ECO:0007669"/>
    <property type="project" value="UniProtKB-SubCell"/>
</dbReference>
<dbReference type="GO" id="GO:0005524">
    <property type="term" value="F:ATP binding"/>
    <property type="evidence" value="ECO:0007669"/>
    <property type="project" value="UniProtKB-UniRule"/>
</dbReference>
<dbReference type="GO" id="GO:0000287">
    <property type="term" value="F:magnesium ion binding"/>
    <property type="evidence" value="ECO:0007669"/>
    <property type="project" value="UniProtKB-UniRule"/>
</dbReference>
<dbReference type="GO" id="GO:0004478">
    <property type="term" value="F:methionine adenosyltransferase activity"/>
    <property type="evidence" value="ECO:0007669"/>
    <property type="project" value="UniProtKB-UniRule"/>
</dbReference>
<dbReference type="GO" id="GO:0006730">
    <property type="term" value="P:one-carbon metabolic process"/>
    <property type="evidence" value="ECO:0007669"/>
    <property type="project" value="UniProtKB-KW"/>
</dbReference>
<dbReference type="GO" id="GO:0006556">
    <property type="term" value="P:S-adenosylmethionine biosynthetic process"/>
    <property type="evidence" value="ECO:0007669"/>
    <property type="project" value="UniProtKB-UniRule"/>
</dbReference>
<dbReference type="CDD" id="cd18079">
    <property type="entry name" value="S-AdoMet_synt"/>
    <property type="match status" value="1"/>
</dbReference>
<dbReference type="FunFam" id="3.30.300.10:FF:000001">
    <property type="entry name" value="S-adenosylmethionine synthase"/>
    <property type="match status" value="1"/>
</dbReference>
<dbReference type="FunFam" id="3.30.300.10:FF:000003">
    <property type="entry name" value="S-adenosylmethionine synthase"/>
    <property type="match status" value="1"/>
</dbReference>
<dbReference type="Gene3D" id="3.30.300.10">
    <property type="match status" value="3"/>
</dbReference>
<dbReference type="HAMAP" id="MF_00086">
    <property type="entry name" value="S_AdoMet_synth1"/>
    <property type="match status" value="1"/>
</dbReference>
<dbReference type="InterPro" id="IPR022631">
    <property type="entry name" value="ADOMET_SYNTHASE_CS"/>
</dbReference>
<dbReference type="InterPro" id="IPR022630">
    <property type="entry name" value="S-AdoMet_synt_C"/>
</dbReference>
<dbReference type="InterPro" id="IPR022629">
    <property type="entry name" value="S-AdoMet_synt_central"/>
</dbReference>
<dbReference type="InterPro" id="IPR022628">
    <property type="entry name" value="S-AdoMet_synt_N"/>
</dbReference>
<dbReference type="InterPro" id="IPR002133">
    <property type="entry name" value="S-AdoMet_synthetase"/>
</dbReference>
<dbReference type="InterPro" id="IPR022636">
    <property type="entry name" value="S-AdoMet_synthetase_sfam"/>
</dbReference>
<dbReference type="NCBIfam" id="TIGR01034">
    <property type="entry name" value="metK"/>
    <property type="match status" value="1"/>
</dbReference>
<dbReference type="PANTHER" id="PTHR11964">
    <property type="entry name" value="S-ADENOSYLMETHIONINE SYNTHETASE"/>
    <property type="match status" value="1"/>
</dbReference>
<dbReference type="Pfam" id="PF02773">
    <property type="entry name" value="S-AdoMet_synt_C"/>
    <property type="match status" value="1"/>
</dbReference>
<dbReference type="Pfam" id="PF02772">
    <property type="entry name" value="S-AdoMet_synt_M"/>
    <property type="match status" value="1"/>
</dbReference>
<dbReference type="Pfam" id="PF00438">
    <property type="entry name" value="S-AdoMet_synt_N"/>
    <property type="match status" value="1"/>
</dbReference>
<dbReference type="PIRSF" id="PIRSF000497">
    <property type="entry name" value="MAT"/>
    <property type="match status" value="1"/>
</dbReference>
<dbReference type="SUPFAM" id="SSF55973">
    <property type="entry name" value="S-adenosylmethionine synthetase"/>
    <property type="match status" value="3"/>
</dbReference>
<dbReference type="PROSITE" id="PS00376">
    <property type="entry name" value="ADOMET_SYNTHASE_1"/>
    <property type="match status" value="1"/>
</dbReference>
<dbReference type="PROSITE" id="PS00377">
    <property type="entry name" value="ADOMET_SYNTHASE_2"/>
    <property type="match status" value="1"/>
</dbReference>
<comment type="function">
    <text evidence="1">Catalyzes the formation of S-adenosylmethionine (AdoMet) from methionine and ATP. The overall synthetic reaction is composed of two sequential steps, AdoMet formation and the subsequent tripolyphosphate hydrolysis which occurs prior to release of AdoMet from the enzyme.</text>
</comment>
<comment type="catalytic activity">
    <reaction evidence="1">
        <text>L-methionine + ATP + H2O = S-adenosyl-L-methionine + phosphate + diphosphate</text>
        <dbReference type="Rhea" id="RHEA:21080"/>
        <dbReference type="ChEBI" id="CHEBI:15377"/>
        <dbReference type="ChEBI" id="CHEBI:30616"/>
        <dbReference type="ChEBI" id="CHEBI:33019"/>
        <dbReference type="ChEBI" id="CHEBI:43474"/>
        <dbReference type="ChEBI" id="CHEBI:57844"/>
        <dbReference type="ChEBI" id="CHEBI:59789"/>
        <dbReference type="EC" id="2.5.1.6"/>
    </reaction>
</comment>
<comment type="cofactor">
    <cofactor evidence="1">
        <name>Mg(2+)</name>
        <dbReference type="ChEBI" id="CHEBI:18420"/>
    </cofactor>
    <text evidence="1">Binds 2 divalent ions per subunit.</text>
</comment>
<comment type="cofactor">
    <cofactor evidence="1">
        <name>K(+)</name>
        <dbReference type="ChEBI" id="CHEBI:29103"/>
    </cofactor>
    <text evidence="1">Binds 1 potassium ion per subunit.</text>
</comment>
<comment type="pathway">
    <text evidence="1">Amino-acid biosynthesis; S-adenosyl-L-methionine biosynthesis; S-adenosyl-L-methionine from L-methionine: step 1/1.</text>
</comment>
<comment type="subunit">
    <text evidence="1">Homotetramer; dimer of dimers.</text>
</comment>
<comment type="subcellular location">
    <subcellularLocation>
        <location evidence="1">Cytoplasm</location>
    </subcellularLocation>
</comment>
<comment type="similarity">
    <text evidence="1">Belongs to the AdoMet synthase family.</text>
</comment>
<protein>
    <recommendedName>
        <fullName evidence="1">S-adenosylmethionine synthase</fullName>
        <shortName evidence="1">AdoMet synthase</shortName>
        <ecNumber evidence="1">2.5.1.6</ecNumber>
    </recommendedName>
    <alternativeName>
        <fullName evidence="1">MAT</fullName>
    </alternativeName>
    <alternativeName>
        <fullName evidence="1">Methionine adenosyltransferase</fullName>
    </alternativeName>
</protein>
<accession>B4THH4</accession>
<keyword id="KW-0067">ATP-binding</keyword>
<keyword id="KW-0963">Cytoplasm</keyword>
<keyword id="KW-0460">Magnesium</keyword>
<keyword id="KW-0479">Metal-binding</keyword>
<keyword id="KW-0547">Nucleotide-binding</keyword>
<keyword id="KW-0554">One-carbon metabolism</keyword>
<keyword id="KW-0630">Potassium</keyword>
<keyword id="KW-0808">Transferase</keyword>
<reference key="1">
    <citation type="journal article" date="2011" name="J. Bacteriol.">
        <title>Comparative genomics of 28 Salmonella enterica isolates: evidence for CRISPR-mediated adaptive sublineage evolution.</title>
        <authorList>
            <person name="Fricke W.F."/>
            <person name="Mammel M.K."/>
            <person name="McDermott P.F."/>
            <person name="Tartera C."/>
            <person name="White D.G."/>
            <person name="Leclerc J.E."/>
            <person name="Ravel J."/>
            <person name="Cebula T.A."/>
        </authorList>
    </citation>
    <scope>NUCLEOTIDE SEQUENCE [LARGE SCALE GENOMIC DNA]</scope>
    <source>
        <strain>SL476</strain>
    </source>
</reference>
<feature type="chain" id="PRO_1000093081" description="S-adenosylmethionine synthase">
    <location>
        <begin position="1"/>
        <end position="384"/>
    </location>
</feature>
<feature type="region of interest" description="Flexible loop" evidence="1">
    <location>
        <begin position="99"/>
        <end position="109"/>
    </location>
</feature>
<feature type="binding site" description="in other chain" evidence="1">
    <location>
        <position position="15"/>
    </location>
    <ligand>
        <name>ATP</name>
        <dbReference type="ChEBI" id="CHEBI:30616"/>
        <note>ligand shared between two neighboring subunits</note>
    </ligand>
</feature>
<feature type="binding site" evidence="1">
    <location>
        <position position="17"/>
    </location>
    <ligand>
        <name>Mg(2+)</name>
        <dbReference type="ChEBI" id="CHEBI:18420"/>
    </ligand>
</feature>
<feature type="binding site" evidence="1">
    <location>
        <position position="43"/>
    </location>
    <ligand>
        <name>K(+)</name>
        <dbReference type="ChEBI" id="CHEBI:29103"/>
    </ligand>
</feature>
<feature type="binding site" description="in other chain" evidence="1">
    <location>
        <position position="56"/>
    </location>
    <ligand>
        <name>L-methionine</name>
        <dbReference type="ChEBI" id="CHEBI:57844"/>
        <note>ligand shared between two neighboring subunits</note>
    </ligand>
</feature>
<feature type="binding site" description="in other chain" evidence="1">
    <location>
        <position position="99"/>
    </location>
    <ligand>
        <name>L-methionine</name>
        <dbReference type="ChEBI" id="CHEBI:57844"/>
        <note>ligand shared between two neighboring subunits</note>
    </ligand>
</feature>
<feature type="binding site" description="in other chain" evidence="1">
    <location>
        <begin position="164"/>
        <end position="166"/>
    </location>
    <ligand>
        <name>ATP</name>
        <dbReference type="ChEBI" id="CHEBI:30616"/>
        <note>ligand shared between two neighboring subunits</note>
    </ligand>
</feature>
<feature type="binding site" description="in other chain" evidence="1">
    <location>
        <begin position="230"/>
        <end position="231"/>
    </location>
    <ligand>
        <name>ATP</name>
        <dbReference type="ChEBI" id="CHEBI:30616"/>
        <note>ligand shared between two neighboring subunits</note>
    </ligand>
</feature>
<feature type="binding site" evidence="1">
    <location>
        <position position="239"/>
    </location>
    <ligand>
        <name>ATP</name>
        <dbReference type="ChEBI" id="CHEBI:30616"/>
        <note>ligand shared between two neighboring subunits</note>
    </ligand>
</feature>
<feature type="binding site" evidence="1">
    <location>
        <position position="239"/>
    </location>
    <ligand>
        <name>L-methionine</name>
        <dbReference type="ChEBI" id="CHEBI:57844"/>
        <note>ligand shared between two neighboring subunits</note>
    </ligand>
</feature>
<feature type="binding site" description="in other chain" evidence="1">
    <location>
        <begin position="245"/>
        <end position="246"/>
    </location>
    <ligand>
        <name>ATP</name>
        <dbReference type="ChEBI" id="CHEBI:30616"/>
        <note>ligand shared between two neighboring subunits</note>
    </ligand>
</feature>
<feature type="binding site" evidence="1">
    <location>
        <position position="262"/>
    </location>
    <ligand>
        <name>ATP</name>
        <dbReference type="ChEBI" id="CHEBI:30616"/>
        <note>ligand shared between two neighboring subunits</note>
    </ligand>
</feature>
<feature type="binding site" evidence="1">
    <location>
        <position position="266"/>
    </location>
    <ligand>
        <name>ATP</name>
        <dbReference type="ChEBI" id="CHEBI:30616"/>
        <note>ligand shared between two neighboring subunits</note>
    </ligand>
</feature>
<feature type="binding site" description="in other chain" evidence="1">
    <location>
        <position position="270"/>
    </location>
    <ligand>
        <name>L-methionine</name>
        <dbReference type="ChEBI" id="CHEBI:57844"/>
        <note>ligand shared between two neighboring subunits</note>
    </ligand>
</feature>
<evidence type="ECO:0000255" key="1">
    <source>
        <dbReference type="HAMAP-Rule" id="MF_00086"/>
    </source>
</evidence>
<organism>
    <name type="scientific">Salmonella heidelberg (strain SL476)</name>
    <dbReference type="NCBI Taxonomy" id="454169"/>
    <lineage>
        <taxon>Bacteria</taxon>
        <taxon>Pseudomonadati</taxon>
        <taxon>Pseudomonadota</taxon>
        <taxon>Gammaproteobacteria</taxon>
        <taxon>Enterobacterales</taxon>
        <taxon>Enterobacteriaceae</taxon>
        <taxon>Salmonella</taxon>
    </lineage>
</organism>
<name>METK_SALHS</name>